<protein>
    <recommendedName>
        <fullName evidence="1">Replication restart protein DnaT</fullName>
    </recommendedName>
</protein>
<feature type="chain" id="PRO_1000149691" description="Replication restart protein DnaT">
    <location>
        <begin position="1"/>
        <end position="179"/>
    </location>
</feature>
<feature type="region of interest" description="Disordered" evidence="2">
    <location>
        <begin position="156"/>
        <end position="179"/>
    </location>
</feature>
<gene>
    <name evidence="1" type="primary">dnaT</name>
    <name type="ordered locus">ECED1_5230</name>
</gene>
<organism>
    <name type="scientific">Escherichia coli O81 (strain ED1a)</name>
    <dbReference type="NCBI Taxonomy" id="585397"/>
    <lineage>
        <taxon>Bacteria</taxon>
        <taxon>Pseudomonadati</taxon>
        <taxon>Pseudomonadota</taxon>
        <taxon>Gammaproteobacteria</taxon>
        <taxon>Enterobacterales</taxon>
        <taxon>Enterobacteriaceae</taxon>
        <taxon>Escherichia</taxon>
    </lineage>
</organism>
<keyword id="KW-0235">DNA replication</keyword>
<keyword id="KW-0238">DNA-binding</keyword>
<keyword id="KW-0639">Primosome</keyword>
<sequence length="179" mass="19499">MSSRVLTPDVVGIDALVHDHQTVLAKAEGGVVAVFDNNAPAFYAVTPARLAELLALEEKLARPGSDVALDDQLYQEPQTAPVAVPMGKFAMYPDWQPDADFIRLAALWGVALREPVTAEELASFIAYWQAEGKVFHHVQWQQKLARSLQIGRASNGGLPKRDVNTVSEPDSQIPPGFRG</sequence>
<name>DNAT_ECO81</name>
<accession>B7N381</accession>
<evidence type="ECO:0000255" key="1">
    <source>
        <dbReference type="HAMAP-Rule" id="MF_01061"/>
    </source>
</evidence>
<evidence type="ECO:0000256" key="2">
    <source>
        <dbReference type="SAM" id="MobiDB-lite"/>
    </source>
</evidence>
<comment type="function">
    <text evidence="1">Involved in the restart of stalled replication forks, which reloads the replicative helicase on sites other than the origin of replication. Can function in multiple replication restart pathways. Displaces ssDNA from a PriB-ssDNA complex. Probably forms a spiral filament on ssDNA.</text>
</comment>
<comment type="subunit">
    <text evidence="1">Homooligomerizes. Interacts with PriB. Component of the replication restart primosome. Primosome assembly occurs via a 'hand-off' mechanism. PriA binds to replication forks, subsequently PriB then DnaT bind; DnaT then displaces ssDNA to generate the helicase loading substrate.</text>
</comment>
<comment type="similarity">
    <text evidence="1">Belongs to the DnaT family.</text>
</comment>
<reference key="1">
    <citation type="journal article" date="2009" name="PLoS Genet.">
        <title>Organised genome dynamics in the Escherichia coli species results in highly diverse adaptive paths.</title>
        <authorList>
            <person name="Touchon M."/>
            <person name="Hoede C."/>
            <person name="Tenaillon O."/>
            <person name="Barbe V."/>
            <person name="Baeriswyl S."/>
            <person name="Bidet P."/>
            <person name="Bingen E."/>
            <person name="Bonacorsi S."/>
            <person name="Bouchier C."/>
            <person name="Bouvet O."/>
            <person name="Calteau A."/>
            <person name="Chiapello H."/>
            <person name="Clermont O."/>
            <person name="Cruveiller S."/>
            <person name="Danchin A."/>
            <person name="Diard M."/>
            <person name="Dossat C."/>
            <person name="Karoui M.E."/>
            <person name="Frapy E."/>
            <person name="Garry L."/>
            <person name="Ghigo J.M."/>
            <person name="Gilles A.M."/>
            <person name="Johnson J."/>
            <person name="Le Bouguenec C."/>
            <person name="Lescat M."/>
            <person name="Mangenot S."/>
            <person name="Martinez-Jehanne V."/>
            <person name="Matic I."/>
            <person name="Nassif X."/>
            <person name="Oztas S."/>
            <person name="Petit M.A."/>
            <person name="Pichon C."/>
            <person name="Rouy Z."/>
            <person name="Ruf C.S."/>
            <person name="Schneider D."/>
            <person name="Tourret J."/>
            <person name="Vacherie B."/>
            <person name="Vallenet D."/>
            <person name="Medigue C."/>
            <person name="Rocha E.P.C."/>
            <person name="Denamur E."/>
        </authorList>
    </citation>
    <scope>NUCLEOTIDE SEQUENCE [LARGE SCALE GENOMIC DNA]</scope>
    <source>
        <strain>ED1a</strain>
    </source>
</reference>
<dbReference type="EMBL" id="CU928162">
    <property type="protein sequence ID" value="CAV18191.1"/>
    <property type="molecule type" value="Genomic_DNA"/>
</dbReference>
<dbReference type="RefSeq" id="WP_000098826.1">
    <property type="nucleotide sequence ID" value="NC_011745.1"/>
</dbReference>
<dbReference type="SMR" id="B7N381"/>
<dbReference type="KEGG" id="ecq:ECED1_5230"/>
<dbReference type="HOGENOM" id="CLU_1501592_0_0_6"/>
<dbReference type="Proteomes" id="UP000000748">
    <property type="component" value="Chromosome"/>
</dbReference>
<dbReference type="GO" id="GO:1990077">
    <property type="term" value="C:primosome complex"/>
    <property type="evidence" value="ECO:0007669"/>
    <property type="project" value="UniProtKB-KW"/>
</dbReference>
<dbReference type="GO" id="GO:0006269">
    <property type="term" value="P:DNA replication, synthesis of primer"/>
    <property type="evidence" value="ECO:0007669"/>
    <property type="project" value="UniProtKB-UniRule"/>
</dbReference>
<dbReference type="Gene3D" id="1.10.8.1180">
    <property type="match status" value="1"/>
</dbReference>
<dbReference type="HAMAP" id="MF_01061">
    <property type="entry name" value="DnaT"/>
    <property type="match status" value="1"/>
</dbReference>
<dbReference type="InterPro" id="IPR020917">
    <property type="entry name" value="DnaT"/>
</dbReference>
<dbReference type="InterPro" id="IPR040480">
    <property type="entry name" value="DnaT_DNA_bind"/>
</dbReference>
<dbReference type="NCBIfam" id="NF002770">
    <property type="entry name" value="PRK02854.1"/>
    <property type="match status" value="1"/>
</dbReference>
<dbReference type="Pfam" id="PF17948">
    <property type="entry name" value="DnaT"/>
    <property type="match status" value="1"/>
</dbReference>
<proteinExistence type="inferred from homology"/>